<evidence type="ECO:0000269" key="1">
    <source>
    </source>
</evidence>
<evidence type="ECO:0000269" key="2">
    <source>
    </source>
</evidence>
<evidence type="ECO:0000269" key="3">
    <source>
    </source>
</evidence>
<evidence type="ECO:0000269" key="4">
    <source>
    </source>
</evidence>
<evidence type="ECO:0000269" key="5">
    <source>
    </source>
</evidence>
<evidence type="ECO:0000269" key="6">
    <source>
    </source>
</evidence>
<evidence type="ECO:0000269" key="7">
    <source>
    </source>
</evidence>
<evidence type="ECO:0000269" key="8">
    <source>
    </source>
</evidence>
<evidence type="ECO:0000269" key="9">
    <source>
    </source>
</evidence>
<evidence type="ECO:0000269" key="10">
    <source>
    </source>
</evidence>
<evidence type="ECO:0000269" key="11">
    <source>
    </source>
</evidence>
<evidence type="ECO:0000269" key="12">
    <source>
    </source>
</evidence>
<evidence type="ECO:0000269" key="13">
    <source>
    </source>
</evidence>
<evidence type="ECO:0000305" key="14"/>
<evidence type="ECO:0007744" key="15">
    <source>
    </source>
</evidence>
<evidence type="ECO:0007829" key="16">
    <source>
        <dbReference type="PDB" id="4JJN"/>
    </source>
</evidence>
<evidence type="ECO:0007829" key="17">
    <source>
        <dbReference type="PDB" id="9B3I"/>
    </source>
</evidence>
<gene>
    <name type="primary">HTA2</name>
    <name type="synonym">H2A2</name>
    <name type="ordered locus">YBL003C</name>
    <name type="ORF">YBL0103</name>
</gene>
<comment type="function">
    <text evidence="2 6 8 9">Core component of nucleosome which plays a central role in DNA double strand break (DSB) repair. Nucleosomes wrap and compact DNA into chromatin, limiting DNA accessibility to the cellular machineries which require DNA as a template. Histones thereby play a central role in transcription regulation, DNA repair, DNA replication and chromosomal stability. DNA accessibility is regulated via a complex set of post-translational modifications of histones, also called histone code, and nucleosome remodeling.</text>
</comment>
<comment type="subunit">
    <text evidence="7 11">The nucleosome is a histone octamer containing two molecules each of H2A, H2B, H3 and H4 assembled in one H3-H4 heterotetramer and two H2A-H2B heterodimers. The octamer wraps approximately 147 bp of DNA. Interacts with NAP1.</text>
</comment>
<comment type="subcellular location">
    <subcellularLocation>
        <location>Nucleus</location>
    </subcellularLocation>
    <subcellularLocation>
        <location>Chromosome</location>
    </subcellularLocation>
</comment>
<comment type="domain">
    <text>The [ST]-Q motif constitutes a recognition sequence for kinases from the PI3/PI4-kinase family.</text>
</comment>
<comment type="PTM">
    <text evidence="2 6 8">Phosphorylated to form H2AS128ph (gamma-H2A) in response to DNA double-strand breaks (DSBs) generated by exogenous genotoxic agents and by stalled replication forks. Phosphorylation is dependent on the DNA damage checkpoint kinases MEC1/ATR and TEL1/ATM, spreads on either side of a detected DSB site and may mark the surrounding chromatin for recruitment of proteins required for DNA damage signaling and repair. Gamma-H2A interacts with ARP4, a shared component of the NuA4 histone acetyltransferase complex and the INO80 and SWR1 chromatin remodeling complexes, and serves to recruit first NuA4, mediating histone H4 acetylation, and subsequently the INO80/SWR1 complexes, facilitating DNA resection, to DSB sites. Gamma-H2A is required for sequestering cohesin around the break site, which is important for efficient post-replicative double-strand break repair by homologous recombination, holding the damaged chromatid close to its undamaged sister template. Gamma-H2A is removed from the DNA prior to the strand invasion-primer extension step of the repair process and subsequently dephosphorylated by PPH3, a component of the histone H2A phosphatase complex (HTP-C). Dephosphorylation is necessary for efficient recovery from the DNA damage checkpoint.</text>
</comment>
<comment type="PTM">
    <text>N-acetylated by NAT4.</text>
</comment>
<comment type="PTM">
    <text>Acetylated by ESA1, a component of the NuA4 histone acetyltransferase (HAT) complex, to form H2AK4ac and H2AK7ac.</text>
</comment>
<comment type="PTM">
    <text evidence="13">Glutamine methylation at Gln-106 (H2AQ105me) by NOP1 is specifically dedicated to polymerase I. It is present at 35S ribosomal DNA locus and impairs binding of the FACT complex (PubMed:24352239).</text>
</comment>
<comment type="PTM">
    <text evidence="10">Sumoylated to from H2AK126su. May lead to transcriptional repression.</text>
</comment>
<comment type="miscellaneous">
    <text evidence="14">In contrast to vertebrates and insects, its C-terminus is not monoubiquitinated.</text>
</comment>
<comment type="miscellaneous">
    <text evidence="5">Present with 32100 molecules/cell in log phase SD medium.</text>
</comment>
<comment type="similarity">
    <text evidence="14">Belongs to the histone H2A family.</text>
</comment>
<comment type="caution">
    <text evidence="14">To ensure consistency between histone entries, we follow the 'Brno' nomenclature for histone modifications, with positions referring to those used in the literature for the 'closest' model organism. Due to slight variations in histone sequences between organisms and to the presence of initiator methionine in UniProtKB/Swiss-Prot sequences, the actual positions of modified amino acids in the sequence generally differ. In this entry the following conventions are used: H2AK4ac = acetylated Lys-5; H2AK7ac = acetylated Lys-8; H2AK126su = sumoylated Lys-127; H2AS128ph = phosphorylated Ser-129.</text>
</comment>
<dbReference type="EMBL" id="V01305">
    <property type="protein sequence ID" value="CAA24612.1"/>
    <property type="molecule type" value="Genomic_DNA"/>
</dbReference>
<dbReference type="EMBL" id="Z26494">
    <property type="protein sequence ID" value="CAA81267.1"/>
    <property type="molecule type" value="Genomic_DNA"/>
</dbReference>
<dbReference type="EMBL" id="Z35764">
    <property type="protein sequence ID" value="CAA84818.1"/>
    <property type="molecule type" value="Genomic_DNA"/>
</dbReference>
<dbReference type="EMBL" id="AY693115">
    <property type="protein sequence ID" value="AAT93134.1"/>
    <property type="molecule type" value="Genomic_DNA"/>
</dbReference>
<dbReference type="EMBL" id="BK006936">
    <property type="protein sequence ID" value="DAA07119.1"/>
    <property type="molecule type" value="Genomic_DNA"/>
</dbReference>
<dbReference type="PIR" id="S05814">
    <property type="entry name" value="HSBYA2"/>
</dbReference>
<dbReference type="RefSeq" id="NP_009552.1">
    <property type="nucleotide sequence ID" value="NM_001178243.1"/>
</dbReference>
<dbReference type="PDB" id="4JJN">
    <property type="method" value="X-ray"/>
    <property type="resolution" value="3.09 A"/>
    <property type="chains" value="C/G=2-132"/>
</dbReference>
<dbReference type="PDB" id="4KUD">
    <property type="method" value="X-ray"/>
    <property type="resolution" value="3.20 A"/>
    <property type="chains" value="C/G=1-132"/>
</dbReference>
<dbReference type="PDB" id="7E9C">
    <property type="method" value="EM"/>
    <property type="resolution" value="3.50 A"/>
    <property type="chains" value="C/G=1-132"/>
</dbReference>
<dbReference type="PDB" id="7E9F">
    <property type="method" value="EM"/>
    <property type="resolution" value="4.00 A"/>
    <property type="chains" value="C/G=1-132"/>
</dbReference>
<dbReference type="PDB" id="8F0X">
    <property type="method" value="EM"/>
    <property type="resolution" value="3.21 A"/>
    <property type="chains" value="B=2-132"/>
</dbReference>
<dbReference type="PDB" id="8F1E">
    <property type="method" value="EM"/>
    <property type="resolution" value="3.28 A"/>
    <property type="chains" value="B=2-132"/>
</dbReference>
<dbReference type="PDB" id="8QKU">
    <property type="method" value="EM"/>
    <property type="resolution" value="3.80 A"/>
    <property type="chains" value="E/F=1-127"/>
</dbReference>
<dbReference type="PDB" id="8QKV">
    <property type="method" value="EM"/>
    <property type="resolution" value="4.70 A"/>
    <property type="chains" value="E/F=1-127"/>
</dbReference>
<dbReference type="PDB" id="9B31">
    <property type="method" value="EM"/>
    <property type="resolution" value="3.20 A"/>
    <property type="chains" value="B=2-132"/>
</dbReference>
<dbReference type="PDB" id="9B3F">
    <property type="method" value="EM"/>
    <property type="resolution" value="3.54 A"/>
    <property type="chains" value="B=2-132"/>
</dbReference>
<dbReference type="PDB" id="9B3I">
    <property type="method" value="EM"/>
    <property type="resolution" value="2.88 A"/>
    <property type="chains" value="B=2-132"/>
</dbReference>
<dbReference type="PDBsum" id="4JJN"/>
<dbReference type="PDBsum" id="4KUD"/>
<dbReference type="PDBsum" id="7E9C"/>
<dbReference type="PDBsum" id="7E9F"/>
<dbReference type="PDBsum" id="8F0X"/>
<dbReference type="PDBsum" id="8F1E"/>
<dbReference type="PDBsum" id="8QKU"/>
<dbReference type="PDBsum" id="8QKV"/>
<dbReference type="PDBsum" id="9B31"/>
<dbReference type="PDBsum" id="9B3F"/>
<dbReference type="PDBsum" id="9B3I"/>
<dbReference type="EMDB" id="EMD-18471"/>
<dbReference type="EMDB" id="EMD-18472"/>
<dbReference type="EMDB" id="EMD-28782"/>
<dbReference type="EMDB" id="EMD-28796"/>
<dbReference type="EMDB" id="EMD-31029"/>
<dbReference type="EMDB" id="EMD-31030"/>
<dbReference type="SMR" id="P04912"/>
<dbReference type="BioGRID" id="32699">
    <property type="interactions" value="363"/>
</dbReference>
<dbReference type="ComplexPortal" id="CPX-1610">
    <property type="entry name" value="Nucleosome, variant HTA2-HTB2"/>
</dbReference>
<dbReference type="ComplexPortal" id="CPX-1611">
    <property type="entry name" value="Nucleosome, variant HTA2-HTB1"/>
</dbReference>
<dbReference type="DIP" id="DIP-6377N"/>
<dbReference type="FunCoup" id="P04912">
    <property type="interactions" value="1379"/>
</dbReference>
<dbReference type="IntAct" id="P04912">
    <property type="interactions" value="204"/>
</dbReference>
<dbReference type="MINT" id="P04912"/>
<dbReference type="STRING" id="4932.YBL003C"/>
<dbReference type="iPTMnet" id="P04912"/>
<dbReference type="PaxDb" id="4932-YBL003C"/>
<dbReference type="PeptideAtlas" id="P04912"/>
<dbReference type="TopDownProteomics" id="P04912"/>
<dbReference type="EnsemblFungi" id="YBL003C_mRNA">
    <property type="protein sequence ID" value="YBL003C"/>
    <property type="gene ID" value="YBL003C"/>
</dbReference>
<dbReference type="GeneID" id="852283"/>
<dbReference type="KEGG" id="sce:YBL003C"/>
<dbReference type="AGR" id="SGD:S000000099"/>
<dbReference type="SGD" id="S000000099">
    <property type="gene designation" value="HTA2"/>
</dbReference>
<dbReference type="VEuPathDB" id="FungiDB:YBL003C"/>
<dbReference type="eggNOG" id="KOG1756">
    <property type="taxonomic scope" value="Eukaryota"/>
</dbReference>
<dbReference type="GeneTree" id="ENSGT00940000153118"/>
<dbReference type="HOGENOM" id="CLU_062828_3_0_1"/>
<dbReference type="InParanoid" id="P04912"/>
<dbReference type="OMA" id="CALESQH"/>
<dbReference type="OrthoDB" id="4067082at2759"/>
<dbReference type="BioCyc" id="YEAST:G3O-28909-MONOMER"/>
<dbReference type="Reactome" id="R-SCE-2299718">
    <property type="pathway name" value="Condensation of Prophase Chromosomes"/>
</dbReference>
<dbReference type="Reactome" id="R-SCE-2559580">
    <property type="pathway name" value="Oxidative Stress Induced Senescence"/>
</dbReference>
<dbReference type="Reactome" id="R-SCE-3214815">
    <property type="pathway name" value="HDACs deacetylate histones"/>
</dbReference>
<dbReference type="Reactome" id="R-SCE-3214858">
    <property type="pathway name" value="RMTs methylate histone arginines"/>
</dbReference>
<dbReference type="Reactome" id="R-SCE-427359">
    <property type="pathway name" value="SIRT1 negatively regulates rRNA expression"/>
</dbReference>
<dbReference type="Reactome" id="R-SCE-5625886">
    <property type="pathway name" value="Activated PKN1 stimulates transcription of AR (androgen receptor) regulated genes KLK2 and KLK3"/>
</dbReference>
<dbReference type="Reactome" id="R-SCE-5689880">
    <property type="pathway name" value="Ub-specific processing proteases"/>
</dbReference>
<dbReference type="Reactome" id="R-SCE-5693565">
    <property type="pathway name" value="Recruitment and ATM-mediated phosphorylation of repair and signaling proteins at DNA double strand breaks"/>
</dbReference>
<dbReference type="Reactome" id="R-SCE-68616">
    <property type="pathway name" value="Assembly of the ORC complex at the origin of replication"/>
</dbReference>
<dbReference type="Reactome" id="R-SCE-73772">
    <property type="pathway name" value="RNA Polymerase I Promoter Escape"/>
</dbReference>
<dbReference type="Reactome" id="R-SCE-9018519">
    <property type="pathway name" value="Estrogen-dependent gene expression"/>
</dbReference>
<dbReference type="BioGRID-ORCS" id="852283">
    <property type="hits" value="6 hits in 10 CRISPR screens"/>
</dbReference>
<dbReference type="EvolutionaryTrace" id="P04912"/>
<dbReference type="PRO" id="PR:P04912"/>
<dbReference type="Proteomes" id="UP000002311">
    <property type="component" value="Chromosome II"/>
</dbReference>
<dbReference type="RNAct" id="P04912">
    <property type="molecule type" value="protein"/>
</dbReference>
<dbReference type="GO" id="GO:0000786">
    <property type="term" value="C:nucleosome"/>
    <property type="evidence" value="ECO:0000250"/>
    <property type="project" value="ComplexPortal"/>
</dbReference>
<dbReference type="GO" id="GO:0005634">
    <property type="term" value="C:nucleus"/>
    <property type="evidence" value="ECO:0000318"/>
    <property type="project" value="GO_Central"/>
</dbReference>
<dbReference type="GO" id="GO:0003677">
    <property type="term" value="F:DNA binding"/>
    <property type="evidence" value="ECO:0000304"/>
    <property type="project" value="SGD"/>
</dbReference>
<dbReference type="GO" id="GO:0046982">
    <property type="term" value="F:protein heterodimerization activity"/>
    <property type="evidence" value="ECO:0007669"/>
    <property type="project" value="InterPro"/>
</dbReference>
<dbReference type="GO" id="GO:0030527">
    <property type="term" value="F:structural constituent of chromatin"/>
    <property type="evidence" value="ECO:0000318"/>
    <property type="project" value="GO_Central"/>
</dbReference>
<dbReference type="GO" id="GO:0006325">
    <property type="term" value="P:chromatin organization"/>
    <property type="evidence" value="ECO:0000304"/>
    <property type="project" value="SGD"/>
</dbReference>
<dbReference type="GO" id="GO:0006281">
    <property type="term" value="P:DNA repair"/>
    <property type="evidence" value="ECO:0000315"/>
    <property type="project" value="SGD"/>
</dbReference>
<dbReference type="GO" id="GO:0031507">
    <property type="term" value="P:heterochromatin formation"/>
    <property type="evidence" value="ECO:0000318"/>
    <property type="project" value="GO_Central"/>
</dbReference>
<dbReference type="CDD" id="cd00074">
    <property type="entry name" value="HFD_H2A"/>
    <property type="match status" value="1"/>
</dbReference>
<dbReference type="FunFam" id="1.10.20.10:FF:000008">
    <property type="entry name" value="Histone H2A"/>
    <property type="match status" value="1"/>
</dbReference>
<dbReference type="Gene3D" id="1.10.20.10">
    <property type="entry name" value="Histone, subunit A"/>
    <property type="match status" value="1"/>
</dbReference>
<dbReference type="IDEAL" id="IID50137"/>
<dbReference type="InterPro" id="IPR009072">
    <property type="entry name" value="Histone-fold"/>
</dbReference>
<dbReference type="InterPro" id="IPR002119">
    <property type="entry name" value="Histone_H2A"/>
</dbReference>
<dbReference type="InterPro" id="IPR007125">
    <property type="entry name" value="Histone_H2A/H2B/H3"/>
</dbReference>
<dbReference type="InterPro" id="IPR032454">
    <property type="entry name" value="Histone_H2A_C"/>
</dbReference>
<dbReference type="InterPro" id="IPR032458">
    <property type="entry name" value="Histone_H2A_CS"/>
</dbReference>
<dbReference type="PANTHER" id="PTHR23430">
    <property type="entry name" value="HISTONE H2A"/>
    <property type="match status" value="1"/>
</dbReference>
<dbReference type="Pfam" id="PF00125">
    <property type="entry name" value="Histone"/>
    <property type="match status" value="1"/>
</dbReference>
<dbReference type="Pfam" id="PF16211">
    <property type="entry name" value="Histone_H2A_C"/>
    <property type="match status" value="1"/>
</dbReference>
<dbReference type="PRINTS" id="PR00620">
    <property type="entry name" value="HISTONEH2A"/>
</dbReference>
<dbReference type="SMART" id="SM00414">
    <property type="entry name" value="H2A"/>
    <property type="match status" value="1"/>
</dbReference>
<dbReference type="SUPFAM" id="SSF47113">
    <property type="entry name" value="Histone-fold"/>
    <property type="match status" value="1"/>
</dbReference>
<dbReference type="PROSITE" id="PS00046">
    <property type="entry name" value="HISTONE_H2A"/>
    <property type="match status" value="1"/>
</dbReference>
<keyword id="KW-0002">3D-structure</keyword>
<keyword id="KW-0007">Acetylation</keyword>
<keyword id="KW-0158">Chromosome</keyword>
<keyword id="KW-0227">DNA damage</keyword>
<keyword id="KW-0234">DNA repair</keyword>
<keyword id="KW-0238">DNA-binding</keyword>
<keyword id="KW-1017">Isopeptide bond</keyword>
<keyword id="KW-0488">Methylation</keyword>
<keyword id="KW-0544">Nucleosome core</keyword>
<keyword id="KW-0539">Nucleus</keyword>
<keyword id="KW-0597">Phosphoprotein</keyword>
<keyword id="KW-1185">Reference proteome</keyword>
<keyword id="KW-0832">Ubl conjugation</keyword>
<name>H2A2_YEAST</name>
<sequence length="132" mass="13989">MSGGKGGKAGSAAKASQSRSAKAGLTFPVGRVHRLLRRGNYAQRIGSGAPVYLTAVLEYLAAEILELAGNAARDNKKTRIIPRHLQLAIRNDDELNKLLGNVTIAQGGVLPNIHQNLLPKKSAKTAKASQEL</sequence>
<accession>P04912</accession>
<accession>D6VPZ9</accession>
<organism>
    <name type="scientific">Saccharomyces cerevisiae (strain ATCC 204508 / S288c)</name>
    <name type="common">Baker's yeast</name>
    <dbReference type="NCBI Taxonomy" id="559292"/>
    <lineage>
        <taxon>Eukaryota</taxon>
        <taxon>Fungi</taxon>
        <taxon>Dikarya</taxon>
        <taxon>Ascomycota</taxon>
        <taxon>Saccharomycotina</taxon>
        <taxon>Saccharomycetes</taxon>
        <taxon>Saccharomycetales</taxon>
        <taxon>Saccharomycetaceae</taxon>
        <taxon>Saccharomyces</taxon>
    </lineage>
</organism>
<proteinExistence type="evidence at protein level"/>
<protein>
    <recommendedName>
        <fullName>Histone H2A.2</fullName>
    </recommendedName>
</protein>
<reference key="1">
    <citation type="journal article" date="1982" name="Proc. Natl. Acad. Sci. U.S.A.">
        <title>The two yeast histone H2A genes encode similar protein subtypes.</title>
        <authorList>
            <person name="Choe J."/>
            <person name="Kolodrubetz D."/>
            <person name="Grunstein M."/>
        </authorList>
    </citation>
    <scope>NUCLEOTIDE SEQUENCE [GENOMIC DNA]</scope>
</reference>
<reference key="2">
    <citation type="journal article" date="1994" name="Yeast">
        <title>Sequence around the centromere of Saccharomyces cerevisiae chromosome II: similarity of CEN2 to CEN4.</title>
        <authorList>
            <person name="Wolfe K.H."/>
            <person name="Lohan A.J.E."/>
        </authorList>
    </citation>
    <scope>NUCLEOTIDE SEQUENCE [GENOMIC DNA]</scope>
    <source>
        <strain>ATCC 204508 / S288c</strain>
    </source>
</reference>
<reference key="3">
    <citation type="journal article" date="1994" name="EMBO J.">
        <title>Complete DNA sequence of yeast chromosome II.</title>
        <authorList>
            <person name="Feldmann H."/>
            <person name="Aigle M."/>
            <person name="Aljinovic G."/>
            <person name="Andre B."/>
            <person name="Baclet M.C."/>
            <person name="Barthe C."/>
            <person name="Baur A."/>
            <person name="Becam A.-M."/>
            <person name="Biteau N."/>
            <person name="Boles E."/>
            <person name="Brandt T."/>
            <person name="Brendel M."/>
            <person name="Brueckner M."/>
            <person name="Bussereau F."/>
            <person name="Christiansen C."/>
            <person name="Contreras R."/>
            <person name="Crouzet M."/>
            <person name="Cziepluch C."/>
            <person name="Demolis N."/>
            <person name="Delaveau T."/>
            <person name="Doignon F."/>
            <person name="Domdey H."/>
            <person name="Duesterhus S."/>
            <person name="Dubois E."/>
            <person name="Dujon B."/>
            <person name="El Bakkoury M."/>
            <person name="Entian K.-D."/>
            <person name="Feuermann M."/>
            <person name="Fiers W."/>
            <person name="Fobo G.M."/>
            <person name="Fritz C."/>
            <person name="Gassenhuber J."/>
            <person name="Glansdorff N."/>
            <person name="Goffeau A."/>
            <person name="Grivell L.A."/>
            <person name="de Haan M."/>
            <person name="Hein C."/>
            <person name="Herbert C.J."/>
            <person name="Hollenberg C.P."/>
            <person name="Holmstroem K."/>
            <person name="Jacq C."/>
            <person name="Jacquet M."/>
            <person name="Jauniaux J.-C."/>
            <person name="Jonniaux J.-L."/>
            <person name="Kallesoee T."/>
            <person name="Kiesau P."/>
            <person name="Kirchrath L."/>
            <person name="Koetter P."/>
            <person name="Korol S."/>
            <person name="Liebl S."/>
            <person name="Logghe M."/>
            <person name="Lohan A.J.E."/>
            <person name="Louis E.J."/>
            <person name="Li Z.Y."/>
            <person name="Maat M.J."/>
            <person name="Mallet L."/>
            <person name="Mannhaupt G."/>
            <person name="Messenguy F."/>
            <person name="Miosga T."/>
            <person name="Molemans F."/>
            <person name="Mueller S."/>
            <person name="Nasr F."/>
            <person name="Obermaier B."/>
            <person name="Perea J."/>
            <person name="Pierard A."/>
            <person name="Piravandi E."/>
            <person name="Pohl F.M."/>
            <person name="Pohl T.M."/>
            <person name="Potier S."/>
            <person name="Proft M."/>
            <person name="Purnelle B."/>
            <person name="Ramezani Rad M."/>
            <person name="Rieger M."/>
            <person name="Rose M."/>
            <person name="Schaaff-Gerstenschlaeger I."/>
            <person name="Scherens B."/>
            <person name="Schwarzlose C."/>
            <person name="Skala J."/>
            <person name="Slonimski P.P."/>
            <person name="Smits P.H.M."/>
            <person name="Souciet J.-L."/>
            <person name="Steensma H.Y."/>
            <person name="Stucka R."/>
            <person name="Urrestarazu L.A."/>
            <person name="van der Aart Q.J.M."/>
            <person name="Van Dyck L."/>
            <person name="Vassarotti A."/>
            <person name="Vetter I."/>
            <person name="Vierendeels F."/>
            <person name="Vissers S."/>
            <person name="Wagner G."/>
            <person name="de Wergifosse P."/>
            <person name="Wolfe K.H."/>
            <person name="Zagulski M."/>
            <person name="Zimmermann F.K."/>
            <person name="Mewes H.-W."/>
            <person name="Kleine K."/>
        </authorList>
    </citation>
    <scope>NUCLEOTIDE SEQUENCE [LARGE SCALE GENOMIC DNA]</scope>
    <source>
        <strain>ATCC 204508 / S288c</strain>
    </source>
</reference>
<reference key="4">
    <citation type="journal article" date="2014" name="G3 (Bethesda)">
        <title>The reference genome sequence of Saccharomyces cerevisiae: Then and now.</title>
        <authorList>
            <person name="Engel S.R."/>
            <person name="Dietrich F.S."/>
            <person name="Fisk D.G."/>
            <person name="Binkley G."/>
            <person name="Balakrishnan R."/>
            <person name="Costanzo M.C."/>
            <person name="Dwight S.S."/>
            <person name="Hitz B.C."/>
            <person name="Karra K."/>
            <person name="Nash R.S."/>
            <person name="Weng S."/>
            <person name="Wong E.D."/>
            <person name="Lloyd P."/>
            <person name="Skrzypek M.S."/>
            <person name="Miyasato S.R."/>
            <person name="Simison M."/>
            <person name="Cherry J.M."/>
        </authorList>
    </citation>
    <scope>GENOME REANNOTATION</scope>
    <source>
        <strain>ATCC 204508 / S288c</strain>
    </source>
</reference>
<reference key="5">
    <citation type="journal article" date="2007" name="Genome Res.">
        <title>Approaching a complete repository of sequence-verified protein-encoding clones for Saccharomyces cerevisiae.</title>
        <authorList>
            <person name="Hu Y."/>
            <person name="Rolfs A."/>
            <person name="Bhullar B."/>
            <person name="Murthy T.V.S."/>
            <person name="Zhu C."/>
            <person name="Berger M.F."/>
            <person name="Camargo A.A."/>
            <person name="Kelley F."/>
            <person name="McCarron S."/>
            <person name="Jepson D."/>
            <person name="Richardson A."/>
            <person name="Raphael J."/>
            <person name="Moreira D."/>
            <person name="Taycher E."/>
            <person name="Zuo D."/>
            <person name="Mohr S."/>
            <person name="Kane M.F."/>
            <person name="Williamson J."/>
            <person name="Simpson A.J.G."/>
            <person name="Bulyk M.L."/>
            <person name="Harlow E."/>
            <person name="Marsischky G."/>
            <person name="Kolodner R.D."/>
            <person name="LaBaer J."/>
        </authorList>
    </citation>
    <scope>NUCLEOTIDE SEQUENCE [GENOMIC DNA]</scope>
    <source>
        <strain>ATCC 204508 / S288c</strain>
    </source>
</reference>
<reference key="6">
    <citation type="journal article" date="1999" name="Mol. Cell. Biol.">
        <title>Esa1p is an essential histone acetyltransferase required for cell cycle progression.</title>
        <authorList>
            <person name="Clarke A.S."/>
            <person name="Lowell J.E."/>
            <person name="Jacobson S.J."/>
            <person name="Pillus L."/>
        </authorList>
    </citation>
    <scope>ACETYLATION AT LYS-5 AND LYS-8</scope>
</reference>
<reference key="7">
    <citation type="journal article" date="2000" name="Nature">
        <title>A role for Saccharomyces cerevisiae histone H2A in DNA repair.</title>
        <authorList>
            <person name="Downs J.A."/>
            <person name="Lowndes N.F."/>
            <person name="Jackson S.P."/>
        </authorList>
    </citation>
    <scope>FUNCTION</scope>
    <scope>MUTAGENESIS OF SER-129</scope>
    <scope>PHOSPHORYLATION AT SER-129</scope>
</reference>
<reference key="8">
    <citation type="journal article" date="2001" name="Mol. Cell">
        <title>Highly specific antibodies determine histone acetylation site usage in yeast heterochromatin and euchromatin.</title>
        <authorList>
            <person name="Suka N."/>
            <person name="Suka Y."/>
            <person name="Carmen A.A."/>
            <person name="Wu J."/>
            <person name="Grunstein M."/>
        </authorList>
    </citation>
    <scope>ACETYLATION AT LYS-8</scope>
</reference>
<reference key="9">
    <citation type="journal article" date="2003" name="J. Biol. Chem.">
        <title>An Nalpha-acetyltransferase responsible for acetylation of the N-terminal residues of histones H4 and H2A.</title>
        <authorList>
            <person name="Song O.-K."/>
            <person name="Wang X."/>
            <person name="Waterborg J.H."/>
            <person name="Sternglanz R."/>
        </authorList>
    </citation>
    <scope>ACETYLATION AT SER-2</scope>
</reference>
<reference key="10">
    <citation type="journal article" date="2003" name="Nature">
        <title>Global analysis of protein expression in yeast.</title>
        <authorList>
            <person name="Ghaemmaghami S."/>
            <person name="Huh W.-K."/>
            <person name="Bower K."/>
            <person name="Howson R.W."/>
            <person name="Belle A."/>
            <person name="Dephoure N."/>
            <person name="O'Shea E.K."/>
            <person name="Weissman J.S."/>
        </authorList>
    </citation>
    <scope>LEVEL OF PROTEIN EXPRESSION [LARGE SCALE ANALYSIS]</scope>
</reference>
<reference key="11">
    <citation type="journal article" date="2004" name="Curr. Biol.">
        <title>Distribution and dynamics of chromatin modification induced by a defined DNA double-strand break.</title>
        <authorList>
            <person name="Shroff R."/>
            <person name="Arbel-Eden A."/>
            <person name="Pilch D.R."/>
            <person name="Ira G."/>
            <person name="Bonner W.M."/>
            <person name="Petrini J.H.J."/>
            <person name="Haber J.E."/>
            <person name="Lichten M."/>
        </authorList>
    </citation>
    <scope>FUNCTION</scope>
    <scope>PHOSPHORYLATION</scope>
</reference>
<reference key="12">
    <citation type="journal article" date="2004" name="Mol. Cell">
        <title>DNA damage response pathway uses histone modification to assemble a double-strand break-specific cohesin domain.</title>
        <authorList>
            <person name="Uenal E."/>
            <person name="Arbel-Eden A."/>
            <person name="Sattler U."/>
            <person name="Shroff R."/>
            <person name="Lichten M."/>
            <person name="Haber J.E."/>
            <person name="Koshland D."/>
        </authorList>
    </citation>
    <scope>FUNCTION</scope>
    <scope>PHOSPHORYLATION</scope>
</reference>
<reference key="13">
    <citation type="journal article" date="2004" name="Mol. Cell">
        <title>Binding of chromatin-modifying activities to phosphorylated histone H2A at DNA damage sites.</title>
        <authorList>
            <person name="Downs J.A."/>
            <person name="Allard S."/>
            <person name="Jobin-Robitaille O."/>
            <person name="Javaheri A."/>
            <person name="Auger A."/>
            <person name="Bouchard N."/>
            <person name="Kron S.J."/>
            <person name="Jackson S.P."/>
            <person name="Cote J."/>
        </authorList>
    </citation>
    <scope>INTERACTION WITH ARP4</scope>
</reference>
<reference key="14">
    <citation type="journal article" date="2006" name="Genes Dev.">
        <title>Histone sumoylation is a negative regulator in Saccharomyces cerevisiae and shows dynamic interplay with positive-acting histone modifications.</title>
        <authorList>
            <person name="Nathan D."/>
            <person name="Ingvarsdottir K."/>
            <person name="Sterner D.E."/>
            <person name="Bylebyl G.R."/>
            <person name="Dokmanovic M."/>
            <person name="Dorsey J.A."/>
            <person name="Whelan K.A."/>
            <person name="Krsmanovic M."/>
            <person name="Lane W.S."/>
            <person name="Meluh P.B."/>
            <person name="Johnson E.S."/>
            <person name="Berger S.L."/>
        </authorList>
    </citation>
    <scope>SUMOYLATION AT LYS-127</scope>
</reference>
<reference key="15">
    <citation type="journal article" date="2006" name="Nature">
        <title>A phosphatase complex that dephosphorylates gamma-H2AX regulates DNA damage checkpoint recovery.</title>
        <authorList>
            <person name="Keogh M.-C."/>
            <person name="Kim J.-A."/>
            <person name="Downey M."/>
            <person name="Fillingham J."/>
            <person name="Chowdhury D."/>
            <person name="Harrison J.C."/>
            <person name="Onishi M."/>
            <person name="Datta N."/>
            <person name="Galicia S."/>
            <person name="Emili A."/>
            <person name="Lieberman J."/>
            <person name="Shen X."/>
            <person name="Buratowski S."/>
            <person name="Haber J.E."/>
            <person name="Durocher D."/>
            <person name="Greenblatt J.F."/>
            <person name="Krogan N.J."/>
        </authorList>
    </citation>
    <scope>FUNCTION</scope>
    <scope>DEPHOSPHORYLATION</scope>
</reference>
<reference key="16">
    <citation type="journal article" date="2008" name="Mol. Cell. Biol.">
        <title>Phosphorylation by casein kinase 2 regulates Nap1 localization and function.</title>
        <authorList>
            <person name="Calvert M.E.K."/>
            <person name="Keck K.M."/>
            <person name="Ptak C."/>
            <person name="Shabanowitz J."/>
            <person name="Hunt D.F."/>
            <person name="Pemberton L.F."/>
        </authorList>
    </citation>
    <scope>INTERACTION WITH NAP1</scope>
    <scope>IDENTIFICATION BY MASS SPECTROMETRY</scope>
</reference>
<reference key="17">
    <citation type="journal article" date="2008" name="Mol. Cell. Proteomics">
        <title>A multidimensional chromatography technology for in-depth phosphoproteome analysis.</title>
        <authorList>
            <person name="Albuquerque C.P."/>
            <person name="Smolka M.B."/>
            <person name="Payne S.H."/>
            <person name="Bafna V."/>
            <person name="Eng J."/>
            <person name="Zhou H."/>
        </authorList>
    </citation>
    <scope>PHOSPHORYLATION [LARGE SCALE ANALYSIS] AT SER-129</scope>
    <scope>IDENTIFICATION BY MASS SPECTROMETRY [LARGE SCALE ANALYSIS]</scope>
</reference>
<reference key="18">
    <citation type="journal article" date="2012" name="Mol. Cell. Proteomics">
        <title>Lysine succinylation and lysine malonylation in histones.</title>
        <authorList>
            <person name="Xie Z."/>
            <person name="Dai J."/>
            <person name="Dai L."/>
            <person name="Tan M."/>
            <person name="Cheng Z."/>
            <person name="Wu Y."/>
            <person name="Boeke J.D."/>
            <person name="Zhao Y."/>
        </authorList>
    </citation>
    <scope>SUCCINYLATION AT LYS-14 AND LYS-22</scope>
    <scope>MALONYLATION AT LYS-120</scope>
</reference>
<reference key="19">
    <citation type="journal article" date="2014" name="Nature">
        <title>Glutamine methylation in histone H2A is an RNA-polymerase-I-dedicated modification.</title>
        <authorList>
            <person name="Tessarz P."/>
            <person name="Santos-Rosa H."/>
            <person name="Robson S.C."/>
            <person name="Sylvestersen K.B."/>
            <person name="Nelson C.J."/>
            <person name="Nielsen M.L."/>
            <person name="Kouzarides T."/>
        </authorList>
    </citation>
    <scope>METHYLATION AT GLN-106</scope>
</reference>
<feature type="initiator methionine" description="Removed" evidence="4">
    <location>
        <position position="1"/>
    </location>
</feature>
<feature type="chain" id="PRO_0000055327" description="Histone H2A.2">
    <location>
        <begin position="2"/>
        <end position="132"/>
    </location>
</feature>
<feature type="short sequence motif" description="[ST]-Q motif">
    <location>
        <begin position="129"/>
        <end position="130"/>
    </location>
</feature>
<feature type="site" description="Not ubiquitinated" evidence="14">
    <location>
        <position position="120"/>
    </location>
</feature>
<feature type="modified residue" description="N-acetylserine" evidence="4">
    <location>
        <position position="2"/>
    </location>
</feature>
<feature type="modified residue" description="N6-acetyllysine" evidence="1">
    <location>
        <position position="5"/>
    </location>
</feature>
<feature type="modified residue" description="N6-acetyllysine" evidence="1 3">
    <location>
        <position position="8"/>
    </location>
</feature>
<feature type="modified residue" description="N6-succinyllysine" evidence="12">
    <location>
        <position position="14"/>
    </location>
</feature>
<feature type="modified residue" description="N6-succinyllysine" evidence="12">
    <location>
        <position position="22"/>
    </location>
</feature>
<feature type="modified residue" description="N5-methylglutamine" evidence="13">
    <location>
        <position position="106"/>
    </location>
</feature>
<feature type="modified residue" description="N6-malonyllysine" evidence="12">
    <location>
        <position position="120"/>
    </location>
</feature>
<feature type="modified residue" description="Phosphoserine" evidence="2 15">
    <location>
        <position position="129"/>
    </location>
</feature>
<feature type="cross-link" description="Glycyl lysine isopeptide (Lys-Gly) (interchain with G-Cter in SUMO)">
    <location>
        <position position="127"/>
    </location>
</feature>
<feature type="mutagenesis site" description="Causes hypersensitivity to DNA-damage-inducing agents." evidence="2">
    <original>S</original>
    <variation>A</variation>
    <location>
        <position position="129"/>
    </location>
</feature>
<feature type="mutagenesis site" description="No effect." evidence="2">
    <original>S</original>
    <variation>E</variation>
    <variation>T</variation>
    <location>
        <position position="129"/>
    </location>
</feature>
<feature type="helix" evidence="17">
    <location>
        <begin position="19"/>
        <end position="22"/>
    </location>
</feature>
<feature type="helix" evidence="17">
    <location>
        <begin position="29"/>
        <end position="39"/>
    </location>
</feature>
<feature type="strand" evidence="17">
    <location>
        <begin position="42"/>
        <end position="45"/>
    </location>
</feature>
<feature type="helix" evidence="17">
    <location>
        <begin position="48"/>
        <end position="74"/>
    </location>
</feature>
<feature type="strand" evidence="17">
    <location>
        <begin position="77"/>
        <end position="80"/>
    </location>
</feature>
<feature type="helix" evidence="17">
    <location>
        <begin position="82"/>
        <end position="90"/>
    </location>
</feature>
<feature type="helix" evidence="17">
    <location>
        <begin position="93"/>
        <end position="99"/>
    </location>
</feature>
<feature type="strand" evidence="16">
    <location>
        <begin position="102"/>
        <end position="104"/>
    </location>
</feature>
<feature type="helix" evidence="16">
    <location>
        <begin position="115"/>
        <end position="117"/>
    </location>
</feature>